<reference key="1">
    <citation type="submission" date="1997-03" db="EMBL/GenBank/DDBJ databases">
        <title>Molecular cloning and characterization of a gene coding for glyceraldehyde 3-phosphate dehydrogenase in the yeast Hansenula polymorpha DL-1.</title>
        <authorList>
            <person name="Sohn J.-H."/>
            <person name="Choi E.-S."/>
            <person name="Rhee S.-K."/>
        </authorList>
    </citation>
    <scope>NUCLEOTIDE SEQUENCE [GENOMIC DNA]</scope>
    <source>
        <strain>ATCC 26012 / BCRC 20466 / JCM 22074 / NRRL Y-7560 / DL-1</strain>
    </source>
</reference>
<reference key="2">
    <citation type="journal article" date="2013" name="BMC Genomics">
        <title>Genome sequence and analysis of methylotrophic yeast Hansenula polymorpha DL1.</title>
        <authorList>
            <person name="Ravin N.V."/>
            <person name="Eldarov M.A."/>
            <person name="Kadnikov V.V."/>
            <person name="Beletsky A.V."/>
            <person name="Schneider J."/>
            <person name="Mardanova E.S."/>
            <person name="Smekalova E.M."/>
            <person name="Zvereva M.I."/>
            <person name="Dontsova O.A."/>
            <person name="Mardanov A.V."/>
            <person name="Skryabin K.G."/>
        </authorList>
    </citation>
    <scope>NUCLEOTIDE SEQUENCE [LARGE SCALE GENOMIC DNA]</scope>
    <source>
        <strain>ATCC 26012 / BCRC 20466 / JCM 22074 / NRRL Y-7560 / DL-1</strain>
    </source>
</reference>
<gene>
    <name type="primary">GPD</name>
    <name type="ORF">HPODL_04957</name>
</gene>
<feature type="chain" id="PRO_0000145570" description="Glyceraldehyde-3-phosphate dehydrogenase">
    <location>
        <begin position="1"/>
        <end position="335"/>
    </location>
</feature>
<feature type="active site" description="Nucleophile" evidence="2">
    <location>
        <position position="151"/>
    </location>
</feature>
<feature type="binding site" evidence="1">
    <location>
        <begin position="12"/>
        <end position="13"/>
    </location>
    <ligand>
        <name>NAD(+)</name>
        <dbReference type="ChEBI" id="CHEBI:57540"/>
    </ligand>
</feature>
<feature type="binding site" evidence="1">
    <location>
        <position position="34"/>
    </location>
    <ligand>
        <name>NAD(+)</name>
        <dbReference type="ChEBI" id="CHEBI:57540"/>
    </ligand>
</feature>
<feature type="binding site" evidence="1">
    <location>
        <position position="79"/>
    </location>
    <ligand>
        <name>NAD(+)</name>
        <dbReference type="ChEBI" id="CHEBI:57540"/>
    </ligand>
</feature>
<feature type="binding site" evidence="1">
    <location>
        <begin position="150"/>
        <end position="152"/>
    </location>
    <ligand>
        <name>D-glyceraldehyde 3-phosphate</name>
        <dbReference type="ChEBI" id="CHEBI:59776"/>
    </ligand>
</feature>
<feature type="binding site" evidence="1">
    <location>
        <position position="181"/>
    </location>
    <ligand>
        <name>D-glyceraldehyde 3-phosphate</name>
        <dbReference type="ChEBI" id="CHEBI:59776"/>
    </ligand>
</feature>
<feature type="binding site" evidence="1">
    <location>
        <begin position="210"/>
        <end position="211"/>
    </location>
    <ligand>
        <name>D-glyceraldehyde 3-phosphate</name>
        <dbReference type="ChEBI" id="CHEBI:59776"/>
    </ligand>
</feature>
<feature type="binding site" evidence="1">
    <location>
        <position position="233"/>
    </location>
    <ligand>
        <name>D-glyceraldehyde 3-phosphate</name>
        <dbReference type="ChEBI" id="CHEBI:59776"/>
    </ligand>
</feature>
<feature type="binding site" evidence="1">
    <location>
        <position position="315"/>
    </location>
    <ligand>
        <name>NAD(+)</name>
        <dbReference type="ChEBI" id="CHEBI:57540"/>
    </ligand>
</feature>
<feature type="site" description="Activates thiol group during catalysis" evidence="1">
    <location>
        <position position="178"/>
    </location>
</feature>
<feature type="sequence conflict" description="In Ref. 1; AAC08320." evidence="3" ref="1">
    <original>TY</original>
    <variation>IF</variation>
    <location>
        <begin position="166"/>
        <end position="167"/>
    </location>
</feature>
<feature type="sequence conflict" description="In Ref. 1; AAC08320." evidence="3" ref="1">
    <original>I</original>
    <variation>V</variation>
    <location>
        <position position="177"/>
    </location>
</feature>
<comment type="catalytic activity">
    <reaction evidence="2">
        <text>D-glyceraldehyde 3-phosphate + phosphate + NAD(+) = (2R)-3-phospho-glyceroyl phosphate + NADH + H(+)</text>
        <dbReference type="Rhea" id="RHEA:10300"/>
        <dbReference type="ChEBI" id="CHEBI:15378"/>
        <dbReference type="ChEBI" id="CHEBI:43474"/>
        <dbReference type="ChEBI" id="CHEBI:57540"/>
        <dbReference type="ChEBI" id="CHEBI:57604"/>
        <dbReference type="ChEBI" id="CHEBI:57945"/>
        <dbReference type="ChEBI" id="CHEBI:59776"/>
        <dbReference type="EC" id="1.2.1.12"/>
    </reaction>
</comment>
<comment type="pathway">
    <text>Carbohydrate degradation; glycolysis; pyruvate from D-glyceraldehyde 3-phosphate: step 1/5.</text>
</comment>
<comment type="subunit">
    <text evidence="1">Homotetramer.</text>
</comment>
<comment type="subcellular location">
    <subcellularLocation>
        <location evidence="1">Cytoplasm</location>
    </subcellularLocation>
</comment>
<comment type="similarity">
    <text evidence="3">Belongs to the glyceraldehyde-3-phosphate dehydrogenase family.</text>
</comment>
<name>G3P_OGAPD</name>
<organism>
    <name type="scientific">Ogataea parapolymorpha (strain ATCC 26012 / BCRC 20466 / JCM 22074 / NRRL Y-7560 / DL-1)</name>
    <name type="common">Yeast</name>
    <name type="synonym">Hansenula polymorpha</name>
    <dbReference type="NCBI Taxonomy" id="871575"/>
    <lineage>
        <taxon>Eukaryota</taxon>
        <taxon>Fungi</taxon>
        <taxon>Dikarya</taxon>
        <taxon>Ascomycota</taxon>
        <taxon>Saccharomycotina</taxon>
        <taxon>Pichiomycetes</taxon>
        <taxon>Pichiales</taxon>
        <taxon>Pichiaceae</taxon>
        <taxon>Ogataea</taxon>
    </lineage>
</organism>
<keyword id="KW-0963">Cytoplasm</keyword>
<keyword id="KW-0324">Glycolysis</keyword>
<keyword id="KW-0520">NAD</keyword>
<keyword id="KW-0560">Oxidoreductase</keyword>
<keyword id="KW-1185">Reference proteome</keyword>
<accession>O59841</accession>
<accession>E7R3B6</accession>
<accession>W1QK29</accession>
<dbReference type="EC" id="1.2.1.12"/>
<dbReference type="EMBL" id="U95625">
    <property type="protein sequence ID" value="AAC08320.1"/>
    <property type="molecule type" value="Genomic_DNA"/>
</dbReference>
<dbReference type="EMBL" id="AEOI02000004">
    <property type="protein sequence ID" value="ESX02203.1"/>
    <property type="molecule type" value="Genomic_DNA"/>
</dbReference>
<dbReference type="PIR" id="T12046">
    <property type="entry name" value="T12046"/>
</dbReference>
<dbReference type="RefSeq" id="XP_013936789.1">
    <property type="nucleotide sequence ID" value="XM_014081314.1"/>
</dbReference>
<dbReference type="SMR" id="O59841"/>
<dbReference type="STRING" id="871575.O59841"/>
<dbReference type="GeneID" id="25774380"/>
<dbReference type="KEGG" id="opa:HPODL_04957"/>
<dbReference type="eggNOG" id="KOG0657">
    <property type="taxonomic scope" value="Eukaryota"/>
</dbReference>
<dbReference type="HOGENOM" id="CLU_030140_0_3_1"/>
<dbReference type="OMA" id="YGYTCNM"/>
<dbReference type="OrthoDB" id="1152826at2759"/>
<dbReference type="BioCyc" id="MetaCyc:MONOMER-13168"/>
<dbReference type="UniPathway" id="UPA00109">
    <property type="reaction ID" value="UER00184"/>
</dbReference>
<dbReference type="Proteomes" id="UP000008673">
    <property type="component" value="Chromosome II"/>
</dbReference>
<dbReference type="GO" id="GO:0005829">
    <property type="term" value="C:cytosol"/>
    <property type="evidence" value="ECO:0007669"/>
    <property type="project" value="UniProtKB-ARBA"/>
</dbReference>
<dbReference type="GO" id="GO:0004365">
    <property type="term" value="F:glyceraldehyde-3-phosphate dehydrogenase (NAD+) (phosphorylating) activity"/>
    <property type="evidence" value="ECO:0007669"/>
    <property type="project" value="UniProtKB-EC"/>
</dbReference>
<dbReference type="GO" id="GO:0051287">
    <property type="term" value="F:NAD binding"/>
    <property type="evidence" value="ECO:0007669"/>
    <property type="project" value="InterPro"/>
</dbReference>
<dbReference type="GO" id="GO:0050661">
    <property type="term" value="F:NADP binding"/>
    <property type="evidence" value="ECO:0007669"/>
    <property type="project" value="InterPro"/>
</dbReference>
<dbReference type="GO" id="GO:0006006">
    <property type="term" value="P:glucose metabolic process"/>
    <property type="evidence" value="ECO:0007669"/>
    <property type="project" value="InterPro"/>
</dbReference>
<dbReference type="GO" id="GO:0006096">
    <property type="term" value="P:glycolytic process"/>
    <property type="evidence" value="ECO:0007669"/>
    <property type="project" value="UniProtKB-UniPathway"/>
</dbReference>
<dbReference type="CDD" id="cd18126">
    <property type="entry name" value="GAPDH_I_C"/>
    <property type="match status" value="1"/>
</dbReference>
<dbReference type="CDD" id="cd05214">
    <property type="entry name" value="GAPDH_I_N"/>
    <property type="match status" value="1"/>
</dbReference>
<dbReference type="FunFam" id="3.30.360.10:FF:000001">
    <property type="entry name" value="Glyceraldehyde-3-phosphate dehydrogenase"/>
    <property type="match status" value="1"/>
</dbReference>
<dbReference type="FunFam" id="3.40.50.720:FF:000020">
    <property type="entry name" value="Glyceraldehyde-3-phosphate dehydrogenase"/>
    <property type="match status" value="1"/>
</dbReference>
<dbReference type="Gene3D" id="3.30.360.10">
    <property type="entry name" value="Dihydrodipicolinate Reductase, domain 2"/>
    <property type="match status" value="1"/>
</dbReference>
<dbReference type="Gene3D" id="3.40.50.720">
    <property type="entry name" value="NAD(P)-binding Rossmann-like Domain"/>
    <property type="match status" value="1"/>
</dbReference>
<dbReference type="InterPro" id="IPR020831">
    <property type="entry name" value="GlycerAld/Erythrose_P_DH"/>
</dbReference>
<dbReference type="InterPro" id="IPR020830">
    <property type="entry name" value="GlycerAld_3-P_DH_AS"/>
</dbReference>
<dbReference type="InterPro" id="IPR020829">
    <property type="entry name" value="GlycerAld_3-P_DH_cat"/>
</dbReference>
<dbReference type="InterPro" id="IPR020828">
    <property type="entry name" value="GlycerAld_3-P_DH_NAD(P)-bd"/>
</dbReference>
<dbReference type="InterPro" id="IPR006424">
    <property type="entry name" value="Glyceraldehyde-3-P_DH_1"/>
</dbReference>
<dbReference type="InterPro" id="IPR036291">
    <property type="entry name" value="NAD(P)-bd_dom_sf"/>
</dbReference>
<dbReference type="NCBIfam" id="TIGR01534">
    <property type="entry name" value="GAPDH-I"/>
    <property type="match status" value="1"/>
</dbReference>
<dbReference type="PANTHER" id="PTHR10836">
    <property type="entry name" value="GLYCERALDEHYDE 3-PHOSPHATE DEHYDROGENASE"/>
    <property type="match status" value="1"/>
</dbReference>
<dbReference type="PANTHER" id="PTHR10836:SF76">
    <property type="entry name" value="GLYCERALDEHYDE-3-PHOSPHATE DEHYDROGENASE-RELATED"/>
    <property type="match status" value="1"/>
</dbReference>
<dbReference type="Pfam" id="PF02800">
    <property type="entry name" value="Gp_dh_C"/>
    <property type="match status" value="1"/>
</dbReference>
<dbReference type="Pfam" id="PF00044">
    <property type="entry name" value="Gp_dh_N"/>
    <property type="match status" value="1"/>
</dbReference>
<dbReference type="PIRSF" id="PIRSF000149">
    <property type="entry name" value="GAP_DH"/>
    <property type="match status" value="1"/>
</dbReference>
<dbReference type="PRINTS" id="PR00078">
    <property type="entry name" value="G3PDHDRGNASE"/>
</dbReference>
<dbReference type="SMART" id="SM00846">
    <property type="entry name" value="Gp_dh_N"/>
    <property type="match status" value="1"/>
</dbReference>
<dbReference type="SUPFAM" id="SSF55347">
    <property type="entry name" value="Glyceraldehyde-3-phosphate dehydrogenase-like, C-terminal domain"/>
    <property type="match status" value="1"/>
</dbReference>
<dbReference type="SUPFAM" id="SSF51735">
    <property type="entry name" value="NAD(P)-binding Rossmann-fold domains"/>
    <property type="match status" value="1"/>
</dbReference>
<dbReference type="PROSITE" id="PS00071">
    <property type="entry name" value="GAPDH"/>
    <property type="match status" value="1"/>
</dbReference>
<proteinExistence type="inferred from homology"/>
<protein>
    <recommendedName>
        <fullName>Glyceraldehyde-3-phosphate dehydrogenase</fullName>
        <shortName>GAPDH</shortName>
        <ecNumber>1.2.1.12</ecNumber>
    </recommendedName>
</protein>
<evidence type="ECO:0000250" key="1"/>
<evidence type="ECO:0000255" key="2">
    <source>
        <dbReference type="PROSITE-ProRule" id="PRU10009"/>
    </source>
</evidence>
<evidence type="ECO:0000305" key="3"/>
<sequence>MTANVGINGFGRIGRLVLRIALSRDDINVIAINDPFIAPDYAAYMFKYDSTHGKFKGTVTHEGKYLVINGKKIEVFQERDPANIPWGKEGVDYVLDSTGVFTTIEGAQKHIDAGAKKVIITAPSKDAPMFVVGVNHEEYTPDIKILSNASCTTNCLAPLAKVINDTYGIEEGLMTTIHSITATQKTVDGPSHKDWRGGRTASGNIIPSSTGAAKAVGKVLPALAGKLTGMSMRVPTTDVSVVDLTVNLKKPTTYEDICATMKKAAEGPLAGILGYTDEAVVSSDFLTDSRSSVFDAKAGILLTPTFVKLVSWYDNEYGYSTRVVDLLQHVAKVSA</sequence>